<organismHost>
    <name type="scientific">Brassicaceae</name>
    <dbReference type="NCBI Taxonomy" id="3700"/>
</organismHost>
<feature type="chain" id="PRO_0000041198" description="Replicase large subunit">
    <location>
        <begin position="1"/>
        <end position="1601"/>
    </location>
</feature>
<feature type="chain" id="PRO_0000041199" description="Replicase small subunit">
    <location>
        <begin position="1"/>
        <end position="1107"/>
    </location>
</feature>
<feature type="domain" description="Alphavirus-like MT" evidence="4">
    <location>
        <begin position="72"/>
        <end position="280"/>
    </location>
</feature>
<feature type="domain" description="(+)RNA virus helicase ATP-binding">
    <location>
        <begin position="795"/>
        <end position="954"/>
    </location>
</feature>
<feature type="domain" description="(+)RNA virus helicase C-terminal">
    <location>
        <begin position="955"/>
        <end position="1107"/>
    </location>
</feature>
<feature type="domain" description="RdRp catalytic" evidence="3">
    <location>
        <begin position="1369"/>
        <end position="1482"/>
    </location>
</feature>
<feature type="region of interest" description="Methyltransferase">
    <location>
        <begin position="50"/>
        <end position="436"/>
    </location>
</feature>
<feature type="region of interest" description="Helicase">
    <location>
        <begin position="823"/>
        <end position="1076"/>
    </location>
</feature>
<feature type="binding site" evidence="2">
    <location>
        <begin position="827"/>
        <end position="834"/>
    </location>
    <ligand>
        <name>ATP</name>
        <dbReference type="ChEBI" id="CHEBI:30616"/>
    </ligand>
</feature>
<evidence type="ECO:0000250" key="1"/>
<evidence type="ECO:0000255" key="2"/>
<evidence type="ECO:0000255" key="3">
    <source>
        <dbReference type="PROSITE-ProRule" id="PRU00539"/>
    </source>
</evidence>
<evidence type="ECO:0000255" key="4">
    <source>
        <dbReference type="PROSITE-ProRule" id="PRU01079"/>
    </source>
</evidence>
<evidence type="ECO:0000305" key="5"/>
<reference key="1">
    <citation type="journal article" date="1994" name="Arch. Virol.">
        <title>Electron microscopic and molecular characterization of turnip vein-clearing virus.</title>
        <authorList>
            <person name="Lartey R.T."/>
            <person name="Lane L.C."/>
            <person name="Melcher U."/>
        </authorList>
    </citation>
    <scope>NUCLEOTIDE SEQUENCE [GENOMIC RNA] OF 1-1108</scope>
    <source>
        <strain>OSU</strain>
    </source>
</reference>
<reference key="2">
    <citation type="journal article" date="1995" name="Gene">
        <title>Completion of a cDNA sequence from a tobamovirus pathogenic to crucifers.</title>
        <authorList>
            <person name="Lartey R.T."/>
            <person name="Voss T.C."/>
            <person name="Melcher U.K."/>
        </authorList>
    </citation>
    <scope>NUCLEOTIDE SEQUENCE [GENOMIC RNA] OF 1109-1601</scope>
    <source>
        <strain>OSU</strain>
    </source>
</reference>
<reference key="3">
    <citation type="journal article" date="1997" name="Gene">
        <authorList>
            <person name="Lartey R.T."/>
            <person name="Voss T.C."/>
            <person name="Melcher U.K."/>
        </authorList>
    </citation>
    <scope>ERRATUM OF PUBMED:8543186</scope>
</reference>
<name>RDRP_TVCV</name>
<dbReference type="EC" id="2.1.1.-"/>
<dbReference type="EC" id="2.7.7.-"/>
<dbReference type="EC" id="2.7.7.48"/>
<dbReference type="EC" id="3.6.4.13"/>
<dbReference type="EMBL" id="U03387">
    <property type="protein sequence ID" value="AAC02783.1"/>
    <property type="molecule type" value="Genomic_RNA"/>
</dbReference>
<dbReference type="EMBL" id="U03387">
    <property type="protein sequence ID" value="AAC02782.1"/>
    <property type="molecule type" value="Genomic_RNA"/>
</dbReference>
<dbReference type="RefSeq" id="NP_046151.1">
    <property type="nucleotide sequence ID" value="NC_001873.1"/>
</dbReference>
<dbReference type="RefSeq" id="NP_046152.1">
    <property type="nucleotide sequence ID" value="NC_001873.1"/>
</dbReference>
<dbReference type="SMR" id="Q88920"/>
<dbReference type="GeneID" id="1494923"/>
<dbReference type="GeneID" id="1494926"/>
<dbReference type="KEGG" id="vg:1494923"/>
<dbReference type="KEGG" id="vg:1494926"/>
<dbReference type="OrthoDB" id="1460at10239"/>
<dbReference type="Proteomes" id="UP000008264">
    <property type="component" value="Genome"/>
</dbReference>
<dbReference type="GO" id="GO:0005524">
    <property type="term" value="F:ATP binding"/>
    <property type="evidence" value="ECO:0007669"/>
    <property type="project" value="UniProtKB-KW"/>
</dbReference>
<dbReference type="GO" id="GO:0016887">
    <property type="term" value="F:ATP hydrolysis activity"/>
    <property type="evidence" value="ECO:0007669"/>
    <property type="project" value="RHEA"/>
</dbReference>
<dbReference type="GO" id="GO:0008174">
    <property type="term" value="F:mRNA methyltransferase activity"/>
    <property type="evidence" value="ECO:0007669"/>
    <property type="project" value="InterPro"/>
</dbReference>
<dbReference type="GO" id="GO:0003723">
    <property type="term" value="F:RNA binding"/>
    <property type="evidence" value="ECO:0007669"/>
    <property type="project" value="InterPro"/>
</dbReference>
<dbReference type="GO" id="GO:0003724">
    <property type="term" value="F:RNA helicase activity"/>
    <property type="evidence" value="ECO:0007669"/>
    <property type="project" value="UniProtKB-EC"/>
</dbReference>
<dbReference type="GO" id="GO:0003968">
    <property type="term" value="F:RNA-directed RNA polymerase activity"/>
    <property type="evidence" value="ECO:0007669"/>
    <property type="project" value="UniProtKB-KW"/>
</dbReference>
<dbReference type="GO" id="GO:0006351">
    <property type="term" value="P:DNA-templated transcription"/>
    <property type="evidence" value="ECO:0007669"/>
    <property type="project" value="InterPro"/>
</dbReference>
<dbReference type="GO" id="GO:0016556">
    <property type="term" value="P:mRNA modification"/>
    <property type="evidence" value="ECO:0007669"/>
    <property type="project" value="InterPro"/>
</dbReference>
<dbReference type="GO" id="GO:0006396">
    <property type="term" value="P:RNA processing"/>
    <property type="evidence" value="ECO:0007669"/>
    <property type="project" value="InterPro"/>
</dbReference>
<dbReference type="GO" id="GO:0052170">
    <property type="term" value="P:symbiont-mediated suppression of host innate immune response"/>
    <property type="evidence" value="ECO:0007669"/>
    <property type="project" value="UniProtKB-KW"/>
</dbReference>
<dbReference type="GO" id="GO:0039694">
    <property type="term" value="P:viral RNA genome replication"/>
    <property type="evidence" value="ECO:0007669"/>
    <property type="project" value="InterPro"/>
</dbReference>
<dbReference type="CDD" id="cd23251">
    <property type="entry name" value="Virgaviridae_RdRp"/>
    <property type="match status" value="1"/>
</dbReference>
<dbReference type="Gene3D" id="3.30.450.420">
    <property type="match status" value="1"/>
</dbReference>
<dbReference type="Gene3D" id="3.40.50.300">
    <property type="entry name" value="P-loop containing nucleotide triphosphate hydrolases"/>
    <property type="match status" value="2"/>
</dbReference>
<dbReference type="InterPro" id="IPR027351">
    <property type="entry name" value="(+)RNA_virus_helicase_core_dom"/>
</dbReference>
<dbReference type="InterPro" id="IPR002588">
    <property type="entry name" value="Alphavirus-like_MT_dom"/>
</dbReference>
<dbReference type="InterPro" id="IPR043502">
    <property type="entry name" value="DNA/RNA_pol_sf"/>
</dbReference>
<dbReference type="InterPro" id="IPR027417">
    <property type="entry name" value="P-loop_NTPase"/>
</dbReference>
<dbReference type="InterPro" id="IPR001788">
    <property type="entry name" value="RNA-dep_RNA_pol_alsuvir"/>
</dbReference>
<dbReference type="InterPro" id="IPR007094">
    <property type="entry name" value="RNA-dir_pol_PSvirus"/>
</dbReference>
<dbReference type="InterPro" id="IPR049329">
    <property type="entry name" value="ToMV_Hel_N"/>
</dbReference>
<dbReference type="InterPro" id="IPR047310">
    <property type="entry name" value="Virgaviridae_RdRp"/>
</dbReference>
<dbReference type="Pfam" id="PF00978">
    <property type="entry name" value="RdRP_2"/>
    <property type="match status" value="1"/>
</dbReference>
<dbReference type="Pfam" id="PF20896">
    <property type="entry name" value="ToMV_Hel_N"/>
    <property type="match status" value="1"/>
</dbReference>
<dbReference type="Pfam" id="PF01443">
    <property type="entry name" value="Viral_helicase1"/>
    <property type="match status" value="1"/>
</dbReference>
<dbReference type="Pfam" id="PF01660">
    <property type="entry name" value="Vmethyltransf"/>
    <property type="match status" value="1"/>
</dbReference>
<dbReference type="SUPFAM" id="SSF56672">
    <property type="entry name" value="DNA/RNA polymerases"/>
    <property type="match status" value="1"/>
</dbReference>
<dbReference type="SUPFAM" id="SSF52540">
    <property type="entry name" value="P-loop containing nucleoside triphosphate hydrolases"/>
    <property type="match status" value="1"/>
</dbReference>
<dbReference type="PROSITE" id="PS51743">
    <property type="entry name" value="ALPHAVIRUS_MT"/>
    <property type="match status" value="1"/>
</dbReference>
<dbReference type="PROSITE" id="PS51657">
    <property type="entry name" value="PSRV_HELICASE"/>
    <property type="match status" value="1"/>
</dbReference>
<dbReference type="PROSITE" id="PS50507">
    <property type="entry name" value="RDRP_SSRNA_POS"/>
    <property type="match status" value="1"/>
</dbReference>
<accession>Q88920</accession>
<accession>Q88919</accession>
<proteinExistence type="inferred from homology"/>
<organism>
    <name type="scientific">Turnip vein-clearing virus</name>
    <name type="common">TVCV</name>
    <dbReference type="NCBI Taxonomy" id="29272"/>
    <lineage>
        <taxon>Viruses</taxon>
        <taxon>Riboviria</taxon>
        <taxon>Orthornavirae</taxon>
        <taxon>Kitrinoviricota</taxon>
        <taxon>Alsuviricetes</taxon>
        <taxon>Martellivirales</taxon>
        <taxon>Virgaviridae</taxon>
        <taxon>Tobamovirus</taxon>
    </lineage>
</organism>
<protein>
    <recommendedName>
        <fullName>Replicase large subunit</fullName>
        <ecNumber>2.1.1.-</ecNumber>
        <ecNumber>2.7.7.-</ecNumber>
        <ecNumber>2.7.7.48</ecNumber>
        <ecNumber>3.6.4.13</ecNumber>
    </recommendedName>
    <alternativeName>
        <fullName>183 kDa protein</fullName>
    </alternativeName>
    <alternativeName>
        <fullName>RNA-directed RNA polymerase</fullName>
    </alternativeName>
    <component>
        <recommendedName>
            <fullName>Replicase small subunit</fullName>
            <ecNumber>2.1.1.-</ecNumber>
            <ecNumber>2.7.7.-</ecNumber>
            <ecNumber>3.6.4.13</ecNumber>
        </recommendedName>
        <alternativeName>
            <fullName>126 kDa protein</fullName>
        </alternativeName>
        <alternativeName>
            <fullName>Methyltransferase/RNA helicase</fullName>
            <shortName>MT/HEL</shortName>
        </alternativeName>
    </component>
</protein>
<sequence>MAQFQQTIDMQTLQAAAGRNSLVNDLASRRVYDNAVEELNARSRRPKVHFSKAVSTEQTLIATNAYPEFEISFTHTQSAVHSLAGGLRSLELEYLMMQVPFGSLTYDIGGNFSAHLFKGRDYVHCCMPNLDVRDIARHEGHKEAIYSYVNRLKRQQRPVPEYQRAAFNNYAENPHFVHCDKPFQQCELTTAYGTDTYAVALHSIYDIPVEEFGSALLRKNVKTCFAAFHFHENMLLDCDTVTLDEIGATFQKSGDNLSFFFHNESTLNYTHSFSNIIKYVCKTFFPASQRFVYHKEFLVTRVNTWYCKFTRVDTFTLFRGVYHNNVDCEEFYKAMDDAWHYKKTLAMLNAERTIFKDNAALNFWFPKVRDMVIVPLFDASITTGRMSRREIMVNKDFVYTVLNHIKTYQAKALTYANVLSFVESIRSRVIINGVTARSEWDTDKAILGPLAMTFFLITKLGHVQDEIILKKFQKFDRTTNELIWTSLCDALMGVIPSVKETLVRGGFVKVAEQALEIKVPELYCTFADRLVLQYKKAEEFQSCDLSKPLEESEKYYNALSELSVLENLDSFDLEAFKTLCQQKNVDPDMAAKVVVAIMKSELTLPFKKPTEEEISESLKPGEGSCAEHKEVLSLQNDAPFPCVKNLVEGSVPAYGMCPKGGGFDKLDVDIADFHLKSVDAVKKGTMMSAVYTGSIKVQQMKNYIDYLSASLAATVSNLCKVLRDVHGVDPESQEKSGVWDVRRGRWLLKPNAKSHAWGVAEDANHKLVIVLLNWDDGKPVCDETWFRVAVSSDSLIYSDMGKLKTLTSCSPNGEPPEPNAKVILVDGVPGCGKTKEIIEKVNFSEDLILVPGKEASKMIIRRANQAGVIRADKDNVRTVDSFLMHPSRRVFKRLFIDEGLMLHTGCVNFLLLLSQCDVAYVYGDTKQIPFICRVANFPYPAHFAKLVADEKEVRRVTLRCPADVTYFLNKKYDGAVMCTSAVERSVKAEVVRGKGALNPITLPLEGKILTFTQADKFELLEKGYKDVNTVHEVQGETYEKTAIVRLTSTPLEIISSASPHVLVALTRHTTCCKYYTVVLDPMVNVISEMEKLSNFLLDMYRVEAGVQYQLQIDAVFRDSNLFVQTPKSGDWRDMQFYYDALLPGNSTILNEFDAVTMNLRDISLNVKDCRIDFSKSVQLPKEQPIFLKPKIRTAAEMPRTAGLLENLVAMIKRNMNAPDLTGTIDIEDTASLVVEKFWDSYVDKEFSGTNEMTMTRESFSRWLSKQESSTVGQLADFNFVDLPAVDEYKHMIKSQPKQKLDLSIQDEYPALQTIVYHSKKINAIFGPMFSELTRMLLERIDSSKFLFYTRKTPAQIEDFFSDLDSTQAMEILELDISKYDKSQNEFHCAVEYKIWEKLGIDEWLAEVWKQGHRKTTLKDYTAGVKTCLWYQRKSGDVTTFIGNTIIIAACLSSMIPMDKVIKAAFCGDDSLIYIPKGLDLPDIQAGANLMWNFEAKLFRKKYGYFCGRYVIHHDRGAIVYYDPLKLISKLGCKHIRDVVHLEELRESLCDVASNLNNCAYFSQLDEAVAEVHKTAVGGSFAFCSIIKYLSDKRLFRDLFFV</sequence>
<comment type="function">
    <molecule>Replicase large subunit</molecule>
    <text>Is an RNA-dependent RNA polymerase active in viral RNA replication.</text>
</comment>
<comment type="function">
    <molecule>Replicase small subunit</molecule>
    <text evidence="1 5">Is a methyltransferase active in RNA capping and an RNA helicase. Methyltransferase displays a cytoplasmic capping enzyme activity. This function is necessary since all viral RNAs are synthesized in the cytoplasm, and host capping enzymes are restricted to the nucleus. Helicase region probably exhibits NTPase and RNA unwinding activities (Potential). It also acts as a suppressor of RNA-mediated gene silencing, also known as post-transcriptional gene silencing (PTGS), a mechanism of plant viral defense that limits the accumulation of viral RNAs. May mediate silencing suppression through either inhibition of HEN1-mediated siRNA or siRNA demethylation (By similarity).</text>
</comment>
<comment type="catalytic activity">
    <reaction evidence="3">
        <text>RNA(n) + a ribonucleoside 5'-triphosphate = RNA(n+1) + diphosphate</text>
        <dbReference type="Rhea" id="RHEA:21248"/>
        <dbReference type="Rhea" id="RHEA-COMP:14527"/>
        <dbReference type="Rhea" id="RHEA-COMP:17342"/>
        <dbReference type="ChEBI" id="CHEBI:33019"/>
        <dbReference type="ChEBI" id="CHEBI:61557"/>
        <dbReference type="ChEBI" id="CHEBI:140395"/>
        <dbReference type="EC" id="2.7.7.48"/>
    </reaction>
</comment>
<comment type="catalytic activity">
    <reaction>
        <text>ATP + H2O = ADP + phosphate + H(+)</text>
        <dbReference type="Rhea" id="RHEA:13065"/>
        <dbReference type="ChEBI" id="CHEBI:15377"/>
        <dbReference type="ChEBI" id="CHEBI:15378"/>
        <dbReference type="ChEBI" id="CHEBI:30616"/>
        <dbReference type="ChEBI" id="CHEBI:43474"/>
        <dbReference type="ChEBI" id="CHEBI:456216"/>
        <dbReference type="EC" id="3.6.4.13"/>
    </reaction>
</comment>
<comment type="subunit">
    <text evidence="1">Heterodimer of a large and a small subunit.</text>
</comment>
<comment type="miscellaneous">
    <text>This protein is translated as a fusion protein by episodic readthrough of a termination codon which is expressed as tyrosine. When readthrough of the terminator codon TGA occurs between the codons for Phe-1116 and Asp-1118, this results in the addition of the RdRp region to the replicase.</text>
</comment>
<comment type="similarity">
    <text evidence="5">Belongs to the ssRNA positive-strand viruses RNA-directed RNA polymerase family.</text>
</comment>
<keyword id="KW-0067">ATP-binding</keyword>
<keyword id="KW-0347">Helicase</keyword>
<keyword id="KW-0945">Host-virus interaction</keyword>
<keyword id="KW-0378">Hydrolase</keyword>
<keyword id="KW-1090">Inhibition of host innate immune response by virus</keyword>
<keyword id="KW-0547">Nucleotide-binding</keyword>
<keyword id="KW-0548">Nucleotidyltransferase</keyword>
<keyword id="KW-1159">RNA suppression of termination</keyword>
<keyword id="KW-0696">RNA-directed RNA polymerase</keyword>
<keyword id="KW-0941">Suppressor of RNA silencing</keyword>
<keyword id="KW-0808">Transferase</keyword>
<keyword id="KW-0899">Viral immunoevasion</keyword>
<keyword id="KW-0693">Viral RNA replication</keyword>